<proteinExistence type="inferred from homology"/>
<sequence length="293" mass="31523">METGTSRVKRGMAEMQKGGVIMDVMNAEQAKVAEAAGASAVMALERVPSDIRAAGGVARMADPTVLEEVMKVVSIPVMAKARIGHIVEARVLEALGADYIDESEVLTPADEVFHIDKKDFTVPFVCGAKDIGEALRRINEGASMLRTKGEPGTGNIVEAVRHMRLIQSQIRKIQSLAKDELYAEAKNLGAPYDLVLYIHENGKLPVVNFAAGGVATPSDAALMMELGADGVFVGSGIFKSDSPEKFARAIVEATTHYKDYKLIAEVSKNLGAPMKGIEISKLHASERMQDRGW</sequence>
<keyword id="KW-0456">Lyase</keyword>
<keyword id="KW-0663">Pyridoxal phosphate</keyword>
<keyword id="KW-0704">Schiff base</keyword>
<dbReference type="EC" id="4.3.3.6" evidence="1"/>
<dbReference type="EMBL" id="AB066209">
    <property type="protein sequence ID" value="BAC06852.1"/>
    <property type="molecule type" value="Genomic_DNA"/>
</dbReference>
<dbReference type="SMR" id="Q8L1A8"/>
<dbReference type="STRING" id="1397.ABW02_24895"/>
<dbReference type="BRENDA" id="4.3.3.6">
    <property type="organism ID" value="649"/>
</dbReference>
<dbReference type="UniPathway" id="UPA00245"/>
<dbReference type="GO" id="GO:0036381">
    <property type="term" value="F:pyridoxal 5'-phosphate synthase (glutamine hydrolysing) activity"/>
    <property type="evidence" value="ECO:0007669"/>
    <property type="project" value="UniProtKB-UniRule"/>
</dbReference>
<dbReference type="GO" id="GO:0006520">
    <property type="term" value="P:amino acid metabolic process"/>
    <property type="evidence" value="ECO:0007669"/>
    <property type="project" value="TreeGrafter"/>
</dbReference>
<dbReference type="GO" id="GO:0042823">
    <property type="term" value="P:pyridoxal phosphate biosynthetic process"/>
    <property type="evidence" value="ECO:0007669"/>
    <property type="project" value="UniProtKB-UniRule"/>
</dbReference>
<dbReference type="GO" id="GO:0008615">
    <property type="term" value="P:pyridoxine biosynthetic process"/>
    <property type="evidence" value="ECO:0007669"/>
    <property type="project" value="TreeGrafter"/>
</dbReference>
<dbReference type="CDD" id="cd04727">
    <property type="entry name" value="pdxS"/>
    <property type="match status" value="1"/>
</dbReference>
<dbReference type="FunFam" id="3.20.20.70:FF:000001">
    <property type="entry name" value="Pyridoxine biosynthesis protein PDX1"/>
    <property type="match status" value="1"/>
</dbReference>
<dbReference type="Gene3D" id="3.20.20.70">
    <property type="entry name" value="Aldolase class I"/>
    <property type="match status" value="1"/>
</dbReference>
<dbReference type="HAMAP" id="MF_01824">
    <property type="entry name" value="PdxS"/>
    <property type="match status" value="1"/>
</dbReference>
<dbReference type="InterPro" id="IPR013785">
    <property type="entry name" value="Aldolase_TIM"/>
</dbReference>
<dbReference type="InterPro" id="IPR001852">
    <property type="entry name" value="PdxS/SNZ"/>
</dbReference>
<dbReference type="InterPro" id="IPR033755">
    <property type="entry name" value="PdxS/SNZ_N"/>
</dbReference>
<dbReference type="InterPro" id="IPR011060">
    <property type="entry name" value="RibuloseP-bd_barrel"/>
</dbReference>
<dbReference type="NCBIfam" id="NF003215">
    <property type="entry name" value="PRK04180.1"/>
    <property type="match status" value="1"/>
</dbReference>
<dbReference type="NCBIfam" id="TIGR00343">
    <property type="entry name" value="pyridoxal 5'-phosphate synthase lyase subunit PdxS"/>
    <property type="match status" value="1"/>
</dbReference>
<dbReference type="PANTHER" id="PTHR31829">
    <property type="entry name" value="PYRIDOXAL 5'-PHOSPHATE SYNTHASE SUBUNIT SNZ1-RELATED"/>
    <property type="match status" value="1"/>
</dbReference>
<dbReference type="PANTHER" id="PTHR31829:SF0">
    <property type="entry name" value="PYRIDOXAL 5'-PHOSPHATE SYNTHASE SUBUNIT SNZ1-RELATED"/>
    <property type="match status" value="1"/>
</dbReference>
<dbReference type="Pfam" id="PF01680">
    <property type="entry name" value="SOR_SNZ"/>
    <property type="match status" value="1"/>
</dbReference>
<dbReference type="PIRSF" id="PIRSF029271">
    <property type="entry name" value="Pdx1"/>
    <property type="match status" value="1"/>
</dbReference>
<dbReference type="SUPFAM" id="SSF51366">
    <property type="entry name" value="Ribulose-phoshate binding barrel"/>
    <property type="match status" value="1"/>
</dbReference>
<dbReference type="PROSITE" id="PS01235">
    <property type="entry name" value="PDXS_SNZ_1"/>
    <property type="match status" value="1"/>
</dbReference>
<dbReference type="PROSITE" id="PS51129">
    <property type="entry name" value="PDXS_SNZ_2"/>
    <property type="match status" value="1"/>
</dbReference>
<reference key="1">
    <citation type="journal article" date="2002" name="Biosci. Biotechnol. Biochem.">
        <title>Significance of the 20-kDa subunit of heterodimeric 2-deoxy-scyllo-inosose synthase for the biosynthesis of butirosin antibiotics in Bacillus circulans.</title>
        <authorList>
            <person name="Tamegai H."/>
            <person name="Nango E."/>
            <person name="Koike-Takeshita A."/>
            <person name="Kudo F."/>
            <person name="Kakinuma K."/>
        </authorList>
    </citation>
    <scope>NUCLEOTIDE SEQUENCE [GENOMIC DNA]</scope>
</reference>
<gene>
    <name evidence="1" type="primary">pdxS</name>
</gene>
<accession>Q8L1A8</accession>
<comment type="function">
    <text evidence="1">Catalyzes the formation of pyridoxal 5'-phosphate from ribose 5-phosphate (RBP), glyceraldehyde 3-phosphate (G3P) and ammonia. The ammonia is provided by the PdxT subunit. Can also use ribulose 5-phosphate and dihydroxyacetone phosphate as substrates, resulting from enzyme-catalyzed isomerization of RBP and G3P, respectively.</text>
</comment>
<comment type="catalytic activity">
    <reaction evidence="1">
        <text>aldehydo-D-ribose 5-phosphate + D-glyceraldehyde 3-phosphate + L-glutamine = pyridoxal 5'-phosphate + L-glutamate + phosphate + 3 H2O + H(+)</text>
        <dbReference type="Rhea" id="RHEA:31507"/>
        <dbReference type="ChEBI" id="CHEBI:15377"/>
        <dbReference type="ChEBI" id="CHEBI:15378"/>
        <dbReference type="ChEBI" id="CHEBI:29985"/>
        <dbReference type="ChEBI" id="CHEBI:43474"/>
        <dbReference type="ChEBI" id="CHEBI:58273"/>
        <dbReference type="ChEBI" id="CHEBI:58359"/>
        <dbReference type="ChEBI" id="CHEBI:59776"/>
        <dbReference type="ChEBI" id="CHEBI:597326"/>
        <dbReference type="EC" id="4.3.3.6"/>
    </reaction>
</comment>
<comment type="pathway">
    <text evidence="1">Cofactor biosynthesis; pyridoxal 5'-phosphate biosynthesis.</text>
</comment>
<comment type="subunit">
    <text evidence="1">In the presence of PdxT, forms a dodecamer of heterodimers.</text>
</comment>
<comment type="similarity">
    <text evidence="1">Belongs to the PdxS/SNZ family.</text>
</comment>
<evidence type="ECO:0000255" key="1">
    <source>
        <dbReference type="HAMAP-Rule" id="MF_01824"/>
    </source>
</evidence>
<feature type="chain" id="PRO_0000109377" description="Pyridoxal 5'-phosphate synthase subunit PdxS">
    <location>
        <begin position="1"/>
        <end position="293"/>
    </location>
</feature>
<feature type="active site" description="Schiff-base intermediate with D-ribose 5-phosphate" evidence="1">
    <location>
        <position position="80"/>
    </location>
</feature>
<feature type="binding site" evidence="1">
    <location>
        <position position="23"/>
    </location>
    <ligand>
        <name>D-ribose 5-phosphate</name>
        <dbReference type="ChEBI" id="CHEBI:78346"/>
    </ligand>
</feature>
<feature type="binding site" evidence="1">
    <location>
        <position position="152"/>
    </location>
    <ligand>
        <name>D-ribose 5-phosphate</name>
        <dbReference type="ChEBI" id="CHEBI:78346"/>
    </ligand>
</feature>
<feature type="binding site" evidence="1">
    <location>
        <position position="164"/>
    </location>
    <ligand>
        <name>D-glyceraldehyde 3-phosphate</name>
        <dbReference type="ChEBI" id="CHEBI:59776"/>
    </ligand>
</feature>
<feature type="binding site" evidence="1">
    <location>
        <position position="213"/>
    </location>
    <ligand>
        <name>D-ribose 5-phosphate</name>
        <dbReference type="ChEBI" id="CHEBI:78346"/>
    </ligand>
</feature>
<feature type="binding site" evidence="1">
    <location>
        <begin position="234"/>
        <end position="235"/>
    </location>
    <ligand>
        <name>D-ribose 5-phosphate</name>
        <dbReference type="ChEBI" id="CHEBI:78346"/>
    </ligand>
</feature>
<organism>
    <name type="scientific">Niallia circulans</name>
    <name type="common">Bacillus circulans</name>
    <dbReference type="NCBI Taxonomy" id="1397"/>
    <lineage>
        <taxon>Bacteria</taxon>
        <taxon>Bacillati</taxon>
        <taxon>Bacillota</taxon>
        <taxon>Bacilli</taxon>
        <taxon>Bacillales</taxon>
        <taxon>Bacillaceae</taxon>
        <taxon>Niallia</taxon>
    </lineage>
</organism>
<name>PDXS_NIACI</name>
<protein>
    <recommendedName>
        <fullName evidence="1">Pyridoxal 5'-phosphate synthase subunit PdxS</fullName>
        <shortName evidence="1">PLP synthase subunit PdxS</shortName>
        <ecNumber evidence="1">4.3.3.6</ecNumber>
    </recommendedName>
    <alternativeName>
        <fullName evidence="1">Pdx1</fullName>
    </alternativeName>
</protein>